<protein>
    <recommendedName>
        <fullName evidence="15">Transcriptional coactivator yorkie</fullName>
    </recommendedName>
    <alternativeName>
        <fullName evidence="14">Protein yorkie</fullName>
    </alternativeName>
    <alternativeName>
        <fullName evidence="15">Transcriptional coactivator YAP1 homolog</fullName>
    </alternativeName>
</protein>
<evidence type="ECO:0000255" key="1">
    <source>
        <dbReference type="PROSITE-ProRule" id="PRU00224"/>
    </source>
</evidence>
<evidence type="ECO:0000256" key="2">
    <source>
        <dbReference type="SAM" id="MobiDB-lite"/>
    </source>
</evidence>
<evidence type="ECO:0000269" key="3">
    <source>
    </source>
</evidence>
<evidence type="ECO:0000269" key="4">
    <source>
    </source>
</evidence>
<evidence type="ECO:0000269" key="5">
    <source>
    </source>
</evidence>
<evidence type="ECO:0000269" key="6">
    <source>
    </source>
</evidence>
<evidence type="ECO:0000269" key="7">
    <source>
    </source>
</evidence>
<evidence type="ECO:0000269" key="8">
    <source>
    </source>
</evidence>
<evidence type="ECO:0000269" key="9">
    <source>
    </source>
</evidence>
<evidence type="ECO:0000269" key="10">
    <source>
    </source>
</evidence>
<evidence type="ECO:0000269" key="11">
    <source>
    </source>
</evidence>
<evidence type="ECO:0000269" key="12">
    <source>
    </source>
</evidence>
<evidence type="ECO:0000303" key="13">
    <source>
    </source>
</evidence>
<evidence type="ECO:0000303" key="14">
    <source>
    </source>
</evidence>
<evidence type="ECO:0000305" key="15"/>
<evidence type="ECO:0000305" key="16">
    <source>
    </source>
</evidence>
<feature type="chain" id="PRO_0000393269" description="Transcriptional coactivator yorkie">
    <location>
        <begin position="1"/>
        <end position="395"/>
    </location>
</feature>
<feature type="domain" description="WW 1" evidence="1">
    <location>
        <begin position="241"/>
        <end position="274"/>
    </location>
</feature>
<feature type="domain" description="WW 2" evidence="1">
    <location>
        <begin position="310"/>
        <end position="343"/>
    </location>
</feature>
<feature type="region of interest" description="Disordered" evidence="2">
    <location>
        <begin position="73"/>
        <end position="100"/>
    </location>
</feature>
<feature type="region of interest" description="Disordered" evidence="2">
    <location>
        <begin position="129"/>
        <end position="150"/>
    </location>
</feature>
<feature type="region of interest" description="Disordered" evidence="2">
    <location>
        <begin position="162"/>
        <end position="199"/>
    </location>
</feature>
<feature type="compositionally biased region" description="Polar residues" evidence="2">
    <location>
        <begin position="84"/>
        <end position="100"/>
    </location>
</feature>
<feature type="compositionally biased region" description="Low complexity" evidence="2">
    <location>
        <begin position="162"/>
        <end position="179"/>
    </location>
</feature>
<feature type="modified residue" description="Phosphoserine" evidence="7">
    <location>
        <position position="82"/>
    </location>
</feature>
<feature type="modified residue" description="Phosphoserine" evidence="7">
    <location>
        <position position="88"/>
    </location>
</feature>
<feature type="modified residue" description="Phosphoserine" evidence="7">
    <location>
        <position position="100"/>
    </location>
</feature>
<feature type="modified residue" description="Phosphoserine" evidence="4">
    <location>
        <position position="117"/>
    </location>
</feature>
<feature type="modified residue" description="Phosphoserine" evidence="5 7">
    <location>
        <position position="145"/>
    </location>
</feature>
<feature type="modified residue" description="Phosphoserine; by CDK7" evidence="12">
    <location>
        <position position="146"/>
    </location>
</feature>
<feature type="modified residue" description="Phosphoserine" evidence="7">
    <location>
        <position position="149"/>
    </location>
</feature>
<feature type="modified residue" description="Phosphoserine" evidence="7">
    <location>
        <position position="227"/>
    </location>
</feature>
<feature type="modified residue" description="Phosphotyrosine" evidence="7">
    <location>
        <position position="228"/>
    </location>
</feature>
<feature type="modified residue" description="Phosphoserine" evidence="7">
    <location>
        <position position="232"/>
    </location>
</feature>
<feature type="splice variant" id="VSP_038903" description="In isoform D." evidence="13">
    <original>DVLQTTKQTTTSTIANNLGPLPDGWEQAVTESGDLYFINHIDRTTSWNDPRMQ</original>
    <variation>E</variation>
    <location>
        <begin position="292"/>
        <end position="344"/>
    </location>
</feature>
<feature type="mutagenesis site" description="Increased activity and nuclear localization and decreased sensitivity to Hpo/Wts-mediated inhibition; when associated with A-227." evidence="8">
    <original>S</original>
    <variation>A</variation>
    <location>
        <position position="88"/>
    </location>
</feature>
<feature type="mutagenesis site" description="Increased activity and nuclear localization, decreased sensitivity to Hpo/Wts-mediated inhibition, loss of interaction with 14-3-3epsilon and 14-3-3zeta." evidence="5 8">
    <original>S</original>
    <variation>A</variation>
    <location>
        <position position="145"/>
    </location>
</feature>
<feature type="mutagenesis site" description="Abolished phosphorylation by Cdk7, leading to increased ubiquitination by the DCX(DCAF12) complex." evidence="12">
    <original>S</original>
    <variation>A</variation>
    <location>
        <position position="146"/>
    </location>
</feature>
<feature type="mutagenesis site" description="Phosphomimetic mutant; decreased ubiquitination by the DCX(DCAF12) complex." evidence="12">
    <original>S</original>
    <variation>D</variation>
    <location>
        <position position="146"/>
    </location>
</feature>
<feature type="mutagenesis site" description="Increased activity and nuclear localization and decreased sensitivity to Hpo/Wts-mediated inhibition; when associated with A-88." evidence="8">
    <original>S</original>
    <variation>A</variation>
    <location>
        <position position="227"/>
    </location>
</feature>
<reference key="1">
    <citation type="journal article" date="2005" name="Cell">
        <title>The Hippo signaling pathway coordinately regulates cell proliferation and apoptosis by inactivating Yorkie, the Drosophila Homolog of YAP.</title>
        <authorList>
            <person name="Huang J."/>
            <person name="Wu S."/>
            <person name="Barrera J."/>
            <person name="Matthews K."/>
            <person name="Pan D."/>
        </authorList>
    </citation>
    <scope>NUCLEOTIDE SEQUENCE [MRNA] (ISOFORM F)</scope>
    <scope>FUNCTION</scope>
    <scope>INTERACTION WITH WTS</scope>
    <scope>PHOSPHORYLATION</scope>
</reference>
<reference key="2">
    <citation type="journal article" date="2000" name="Science">
        <title>The genome sequence of Drosophila melanogaster.</title>
        <authorList>
            <person name="Adams M.D."/>
            <person name="Celniker S.E."/>
            <person name="Holt R.A."/>
            <person name="Evans C.A."/>
            <person name="Gocayne J.D."/>
            <person name="Amanatides P.G."/>
            <person name="Scherer S.E."/>
            <person name="Li P.W."/>
            <person name="Hoskins R.A."/>
            <person name="Galle R.F."/>
            <person name="George R.A."/>
            <person name="Lewis S.E."/>
            <person name="Richards S."/>
            <person name="Ashburner M."/>
            <person name="Henderson S.N."/>
            <person name="Sutton G.G."/>
            <person name="Wortman J.R."/>
            <person name="Yandell M.D."/>
            <person name="Zhang Q."/>
            <person name="Chen L.X."/>
            <person name="Brandon R.C."/>
            <person name="Rogers Y.-H.C."/>
            <person name="Blazej R.G."/>
            <person name="Champe M."/>
            <person name="Pfeiffer B.D."/>
            <person name="Wan K.H."/>
            <person name="Doyle C."/>
            <person name="Baxter E.G."/>
            <person name="Helt G."/>
            <person name="Nelson C.R."/>
            <person name="Miklos G.L.G."/>
            <person name="Abril J.F."/>
            <person name="Agbayani A."/>
            <person name="An H.-J."/>
            <person name="Andrews-Pfannkoch C."/>
            <person name="Baldwin D."/>
            <person name="Ballew R.M."/>
            <person name="Basu A."/>
            <person name="Baxendale J."/>
            <person name="Bayraktaroglu L."/>
            <person name="Beasley E.M."/>
            <person name="Beeson K.Y."/>
            <person name="Benos P.V."/>
            <person name="Berman B.P."/>
            <person name="Bhandari D."/>
            <person name="Bolshakov S."/>
            <person name="Borkova D."/>
            <person name="Botchan M.R."/>
            <person name="Bouck J."/>
            <person name="Brokstein P."/>
            <person name="Brottier P."/>
            <person name="Burtis K.C."/>
            <person name="Busam D.A."/>
            <person name="Butler H."/>
            <person name="Cadieu E."/>
            <person name="Center A."/>
            <person name="Chandra I."/>
            <person name="Cherry J.M."/>
            <person name="Cawley S."/>
            <person name="Dahlke C."/>
            <person name="Davenport L.B."/>
            <person name="Davies P."/>
            <person name="de Pablos B."/>
            <person name="Delcher A."/>
            <person name="Deng Z."/>
            <person name="Mays A.D."/>
            <person name="Dew I."/>
            <person name="Dietz S.M."/>
            <person name="Dodson K."/>
            <person name="Doup L.E."/>
            <person name="Downes M."/>
            <person name="Dugan-Rocha S."/>
            <person name="Dunkov B.C."/>
            <person name="Dunn P."/>
            <person name="Durbin K.J."/>
            <person name="Evangelista C.C."/>
            <person name="Ferraz C."/>
            <person name="Ferriera S."/>
            <person name="Fleischmann W."/>
            <person name="Fosler C."/>
            <person name="Gabrielian A.E."/>
            <person name="Garg N.S."/>
            <person name="Gelbart W.M."/>
            <person name="Glasser K."/>
            <person name="Glodek A."/>
            <person name="Gong F."/>
            <person name="Gorrell J.H."/>
            <person name="Gu Z."/>
            <person name="Guan P."/>
            <person name="Harris M."/>
            <person name="Harris N.L."/>
            <person name="Harvey D.A."/>
            <person name="Heiman T.J."/>
            <person name="Hernandez J.R."/>
            <person name="Houck J."/>
            <person name="Hostin D."/>
            <person name="Houston K.A."/>
            <person name="Howland T.J."/>
            <person name="Wei M.-H."/>
            <person name="Ibegwam C."/>
            <person name="Jalali M."/>
            <person name="Kalush F."/>
            <person name="Karpen G.H."/>
            <person name="Ke Z."/>
            <person name="Kennison J.A."/>
            <person name="Ketchum K.A."/>
            <person name="Kimmel B.E."/>
            <person name="Kodira C.D."/>
            <person name="Kraft C.L."/>
            <person name="Kravitz S."/>
            <person name="Kulp D."/>
            <person name="Lai Z."/>
            <person name="Lasko P."/>
            <person name="Lei Y."/>
            <person name="Levitsky A.A."/>
            <person name="Li J.H."/>
            <person name="Li Z."/>
            <person name="Liang Y."/>
            <person name="Lin X."/>
            <person name="Liu X."/>
            <person name="Mattei B."/>
            <person name="McIntosh T.C."/>
            <person name="McLeod M.P."/>
            <person name="McPherson D."/>
            <person name="Merkulov G."/>
            <person name="Milshina N.V."/>
            <person name="Mobarry C."/>
            <person name="Morris J."/>
            <person name="Moshrefi A."/>
            <person name="Mount S.M."/>
            <person name="Moy M."/>
            <person name="Murphy B."/>
            <person name="Murphy L."/>
            <person name="Muzny D.M."/>
            <person name="Nelson D.L."/>
            <person name="Nelson D.R."/>
            <person name="Nelson K.A."/>
            <person name="Nixon K."/>
            <person name="Nusskern D.R."/>
            <person name="Pacleb J.M."/>
            <person name="Palazzolo M."/>
            <person name="Pittman G.S."/>
            <person name="Pan S."/>
            <person name="Pollard J."/>
            <person name="Puri V."/>
            <person name="Reese M.G."/>
            <person name="Reinert K."/>
            <person name="Remington K."/>
            <person name="Saunders R.D.C."/>
            <person name="Scheeler F."/>
            <person name="Shen H."/>
            <person name="Shue B.C."/>
            <person name="Siden-Kiamos I."/>
            <person name="Simpson M."/>
            <person name="Skupski M.P."/>
            <person name="Smith T.J."/>
            <person name="Spier E."/>
            <person name="Spradling A.C."/>
            <person name="Stapleton M."/>
            <person name="Strong R."/>
            <person name="Sun E."/>
            <person name="Svirskas R."/>
            <person name="Tector C."/>
            <person name="Turner R."/>
            <person name="Venter E."/>
            <person name="Wang A.H."/>
            <person name="Wang X."/>
            <person name="Wang Z.-Y."/>
            <person name="Wassarman D.A."/>
            <person name="Weinstock G.M."/>
            <person name="Weissenbach J."/>
            <person name="Williams S.M."/>
            <person name="Woodage T."/>
            <person name="Worley K.C."/>
            <person name="Wu D."/>
            <person name="Yang S."/>
            <person name="Yao Q.A."/>
            <person name="Ye J."/>
            <person name="Yeh R.-F."/>
            <person name="Zaveri J.S."/>
            <person name="Zhan M."/>
            <person name="Zhang G."/>
            <person name="Zhao Q."/>
            <person name="Zheng L."/>
            <person name="Zheng X.H."/>
            <person name="Zhong F.N."/>
            <person name="Zhong W."/>
            <person name="Zhou X."/>
            <person name="Zhu S.C."/>
            <person name="Zhu X."/>
            <person name="Smith H.O."/>
            <person name="Gibbs R.A."/>
            <person name="Myers E.W."/>
            <person name="Rubin G.M."/>
            <person name="Venter J.C."/>
        </authorList>
    </citation>
    <scope>NUCLEOTIDE SEQUENCE [LARGE SCALE GENOMIC DNA]</scope>
    <source>
        <strain>Berkeley</strain>
    </source>
</reference>
<reference key="3">
    <citation type="journal article" date="2002" name="Genome Biol.">
        <title>Annotation of the Drosophila melanogaster euchromatic genome: a systematic review.</title>
        <authorList>
            <person name="Misra S."/>
            <person name="Crosby M.A."/>
            <person name="Mungall C.J."/>
            <person name="Matthews B.B."/>
            <person name="Campbell K.S."/>
            <person name="Hradecky P."/>
            <person name="Huang Y."/>
            <person name="Kaminker J.S."/>
            <person name="Millburn G.H."/>
            <person name="Prochnik S.E."/>
            <person name="Smith C.D."/>
            <person name="Tupy J.L."/>
            <person name="Whitfield E.J."/>
            <person name="Bayraktaroglu L."/>
            <person name="Berman B.P."/>
            <person name="Bettencourt B.R."/>
            <person name="Celniker S.E."/>
            <person name="de Grey A.D.N.J."/>
            <person name="Drysdale R.A."/>
            <person name="Harris N.L."/>
            <person name="Richter J."/>
            <person name="Russo S."/>
            <person name="Schroeder A.J."/>
            <person name="Shu S.Q."/>
            <person name="Stapleton M."/>
            <person name="Yamada C."/>
            <person name="Ashburner M."/>
            <person name="Gelbart W.M."/>
            <person name="Rubin G.M."/>
            <person name="Lewis S.E."/>
        </authorList>
    </citation>
    <scope>GENOME REANNOTATION</scope>
    <source>
        <strain>Berkeley</strain>
    </source>
</reference>
<reference key="4">
    <citation type="journal article" date="2002" name="Genome Biol.">
        <title>A Drosophila full-length cDNA resource.</title>
        <authorList>
            <person name="Stapleton M."/>
            <person name="Carlson J.W."/>
            <person name="Brokstein P."/>
            <person name="Yu C."/>
            <person name="Champe M."/>
            <person name="George R.A."/>
            <person name="Guarin H."/>
            <person name="Kronmiller B."/>
            <person name="Pacleb J.M."/>
            <person name="Park S."/>
            <person name="Wan K.H."/>
            <person name="Rubin G.M."/>
            <person name="Celniker S.E."/>
        </authorList>
    </citation>
    <scope>NUCLEOTIDE SEQUENCE [LARGE SCALE MRNA] (ISOFORMS D AND F)</scope>
    <source>
        <strain>Berkeley</strain>
        <tissue>Embryo</tissue>
    </source>
</reference>
<reference key="5">
    <citation type="journal article" date="2007" name="Mol. Biosyst.">
        <title>An integrated chemical, mass spectrometric and computational strategy for (quantitative) phosphoproteomics: application to Drosophila melanogaster Kc167 cells.</title>
        <authorList>
            <person name="Bodenmiller B."/>
            <person name="Mueller L.N."/>
            <person name="Pedrioli P.G.A."/>
            <person name="Pflieger D."/>
            <person name="Juenger M.A."/>
            <person name="Eng J.K."/>
            <person name="Aebersold R."/>
            <person name="Tao W.A."/>
        </authorList>
    </citation>
    <scope>PHOSPHORYLATION [LARGE SCALE ANALYSIS] AT SER-117</scope>
    <scope>IDENTIFICATION BY MASS SPECTROMETRY</scope>
</reference>
<reference key="6">
    <citation type="journal article" date="2008" name="Curr. Biol.">
        <title>SCALLOPED interacts with YORKIE, the nuclear effector of the hippo tumor-suppressor pathway in Drosophila.</title>
        <authorList>
            <person name="Goulev Y."/>
            <person name="Fauny J.D."/>
            <person name="Gonzalez-Marti B."/>
            <person name="Flagiello D."/>
            <person name="Silber J."/>
            <person name="Zider A."/>
        </authorList>
    </citation>
    <scope>FUNCTION</scope>
    <scope>SUBCELLULAR LOCATION</scope>
    <scope>INTERACTION WITH SD</scope>
</reference>
<reference key="7">
    <citation type="journal article" date="2008" name="Development">
        <title>In vivo regulation of Yorkie phosphorylation and localization.</title>
        <authorList>
            <person name="Oh H."/>
            <person name="Irvine K.D."/>
        </authorList>
    </citation>
    <scope>SUBCELLULAR LOCATION</scope>
    <scope>PHOSPHORYLATION AT SER-145</scope>
    <scope>INTERACTION WITH 14-3-3 EPSILON AND 14-3-3 ZETA</scope>
    <scope>MUTAGENESIS OF SER-145</scope>
</reference>
<reference key="8">
    <citation type="journal article" date="2008" name="J. Proteome Res.">
        <title>Phosphoproteome analysis of Drosophila melanogaster embryos.</title>
        <authorList>
            <person name="Zhai B."/>
            <person name="Villen J."/>
            <person name="Beausoleil S.A."/>
            <person name="Mintseris J."/>
            <person name="Gygi S.P."/>
        </authorList>
    </citation>
    <scope>PHOSPHORYLATION [LARGE SCALE ANALYSIS] AT SER-82; SER-88; SER-100; SER-145; SER-149; SER-227; TYR-228 AND SER-232</scope>
    <scope>IDENTIFICATION BY MASS SPECTROMETRY</scope>
    <source>
        <tissue>Embryo</tissue>
    </source>
</reference>
<reference key="9">
    <citation type="journal article" date="2010" name="Dev. Biol.">
        <title>Hippo signaling regulates Yorkie nuclear localization and activity through 14-3-3 dependent and independent mechanisms.</title>
        <authorList>
            <person name="Ren F."/>
            <person name="Zhang L."/>
            <person name="Jiang J."/>
        </authorList>
    </citation>
    <scope>FUNCTION</scope>
    <scope>SUBCELLULAR LOCATION</scope>
    <scope>PHOSPHORYLATION</scope>
    <scope>MUTAGENESIS OF SER-88; SER-145 AND SER-227</scope>
</reference>
<reference key="10">
    <citation type="journal article" date="2012" name="PLoS Genet.">
        <title>Drosophila activated Cdc42 kinase has an anti-apoptotic function.</title>
        <authorList>
            <person name="Schoenherr J.A."/>
            <person name="Drennan J.M."/>
            <person name="Martinez J.S."/>
            <person name="Chikka M.R."/>
            <person name="Hall M.C."/>
            <person name="Chang H.C."/>
            <person name="Clemens J.C."/>
        </authorList>
    </citation>
    <scope>FUNCTION</scope>
    <scope>SUBCELLULAR LOCATION</scope>
</reference>
<reference key="11">
    <citation type="journal article" date="2016" name="Cell Discov.">
        <title>Ack promotes tissue growth via phosphorylation and suppression of the Hippo pathway component Expanded.</title>
        <authorList>
            <person name="Hu L."/>
            <person name="Xu J."/>
            <person name="Yin M.X."/>
            <person name="Zhang L."/>
            <person name="Lu Y."/>
            <person name="Wu W."/>
            <person name="Xue Z."/>
            <person name="Ho M.S."/>
            <person name="Gao G."/>
            <person name="Zhao Y."/>
            <person name="Zhang L."/>
        </authorList>
    </citation>
    <scope>FUNCTION</scope>
    <scope>INTERACTION WITH ACK AND EX</scope>
</reference>
<reference key="12">
    <citation type="journal article" date="2016" name="Dev. Cell">
        <title>Drosophila Schip1 links Expanded and Tao-1 to regulate hippo signaling.</title>
        <authorList>
            <person name="Chung H.L."/>
            <person name="Augustine G.J."/>
            <person name="Choi K.W."/>
        </authorList>
    </citation>
    <scope>SUBCELLULAR LOCATION</scope>
</reference>
<reference key="13">
    <citation type="journal article" date="2020" name="Genes Dev.">
        <title>CDK7 regulates organ size and tumor growth by safeguarding the Hippo pathway effector Yki/Yap/Taz in the nucleus.</title>
        <authorList>
            <person name="Cho Y.S."/>
            <person name="Li S."/>
            <person name="Wang X."/>
            <person name="Zhu J."/>
            <person name="Zhuo S."/>
            <person name="Han Y."/>
            <person name="Yue T."/>
            <person name="Yang Y."/>
            <person name="Jiang J."/>
        </authorList>
    </citation>
    <scope>SUBCELLULAR LOCATION</scope>
    <scope>PHOSPHORYLATION AT SER-146</scope>
    <scope>UBIQUITINATION</scope>
    <scope>MUTAGENESIS OF SER-146</scope>
</reference>
<sequence>MLTTMSASSNTNSLIEKEIDDEDMLSPIKSNNLVVRVNQDTDDNLQALFDSVLNPGDAKRPLQLPLRMRKLPNSFFTPPAPSHSRANSADSTYDAGSQSSINIGNKASIVQQPDGQSPIAAIPQLQIQPSPQHSRLAIHHSRARSSPASLQQNYNVRARSDAAAANNPNANPSSQQQPAGPTFPENSAQEFPSGAPASSAIDLDAMNTCMSQDIPMSMQTVHKKQRSYDVISPIQLNRQLGALPPGWEQAKTNDGQIYYLNHTTKSTQWEDPRIQYRQQQQILMAERIKQNDVLQTTKQTTTSTIANNLGPLPDGWEQAVTESGDLYFINHIDRTTSWNDPRMQSGLSVLDCPDNLVSSLQIEDNLCSNLFNDAQAIVNPPSSHKPDDLEWYKIN</sequence>
<proteinExistence type="evidence at protein level"/>
<comment type="function">
    <text evidence="3 6 8 9 11">Transcriptional coactivator which is the critical downstream regulatory target in the Hippo/SWH (Sav/Wts/Hpo) signaling pathway that plays a pivotal role in organ size control and tumor suppression by restricting proliferation and promoting apoptosis (PubMed:16096061, PubMed:18313299, PubMed:22615583, PubMed:27462444). The core of this pathway is composed of a kinase cascade wherein Hippo (Hpo), in complex with its regulatory protein Salvador (Sav), phosphorylates and activates Warts (Wts) in complex with its regulatory protein Mats, which in turn phosphorylates and inactivates the Yorkie (Yki) oncoprotein (PubMed:16096061, PubMed:19900439). The Hippo/SWH signaling pathway inhibits the activity of the transcriptional complex formed by Scalloped (sd) and Yki and the target genes of this pathway include cyclin-E (cycE), diap1 and bantam (PubMed:16096061, PubMed:18313299). Regulates the expression of G1/S-specific CycE and diap1, thereby promoting cell proliferation and inhibiting apoptosis (PubMed:18313299). Required for transcriptional activity of sd in wing imaginal disks (PubMed:18313299). Induces expression of expression of vestigial (vg) in wing and haltere disks and the expression of transcription factor E2f (E2f) (PubMed:18313299).</text>
</comment>
<comment type="subunit">
    <text evidence="3 5 6 11">Interacts (via WW domains) with wts (PubMed:16096061). Interacts (via N-terminus) with sd (via C-terminus) and this interaction enhances the transcriptional activity of sd (PubMed:18313299). The phosphorylated form interacts with 14-3-3epsilon and 14-3-3zeta (PubMed:18256197). Interacts with Ack and ex (PubMed:27462444).</text>
</comment>
<comment type="interaction">
    <interactant intactId="EBI-141254">
        <id>Q45VV3</id>
    </interactant>
    <interactant intactId="EBI-162238">
        <id>P42003</id>
        <label>Mad</label>
    </interactant>
    <organismsDiffer>false</organismsDiffer>
    <experiments>2</experiments>
</comment>
<comment type="subcellular location">
    <subcellularLocation>
        <location evidence="5 6 8 9 10">Cytoplasm</location>
    </subcellularLocation>
    <subcellularLocation>
        <location evidence="5 6 8 12">Nucleus</location>
    </subcellularLocation>
    <text evidence="5 6 8">Predominantly cytoplasmic (PubMed:18256197, PubMed:18313299, PubMed:19900439). sd promotes its nuclear localization (PubMed:18313299). 14-3-3epsilon, 14-3-3zeta and wts inhibit its nuclear localization (PubMed:18256197, PubMed:19900439).</text>
</comment>
<comment type="alternative products">
    <event type="alternative splicing"/>
    <isoform>
        <id>Q45VV3-1</id>
        <name>F</name>
        <sequence type="displayed"/>
    </isoform>
    <isoform>
        <id>Q45VV3-2</id>
        <name>D</name>
        <sequence type="described" ref="VSP_038903"/>
    </isoform>
</comment>
<comment type="PTM">
    <text evidence="3 5 8 12">Its activity is regulated by multiple phosphorylation events (PubMed:16096061, PubMed:18256197, PubMed:19900439, PubMed:31857346). Phosphorylation at Ser-88, Ser-145 and Ser-227 negatively regulate its activity and restrict its nuclear localization (PubMed:19900439). Wts-mediated phosphorylation at Ser-145 promotes interaction with 14-3-3epsilon and 14-3-3zeta (PubMed:18256197). Phosphorylation at Ser-88 and Ser-227 regulate nuclear localization and activity independent of 14-3-3 association (PubMed:19900439). Phosphorylation at Ser-146 by Cdk7 promotes its stability by preventing ubiquitination by the DCX(DCAF12) complex (PubMed:31857346).</text>
</comment>
<comment type="PTM">
    <text evidence="12">Ubiquitinated by the DCX(DCAF12) complex, leading to its degradation (PubMed:31857346). Phosphorylation at Ser-146 by Cdk7 prevents ubiquitination by the DCX(DCAF12) complex (PubMed:31857346).</text>
</comment>
<comment type="miscellaneous">
    <text evidence="16">Named for its loss-of-function phenotype after a very small breed of dog, the Yorkshire Terrier.</text>
</comment>
<comment type="similarity">
    <text evidence="15">Belongs to the YAP1 family.</text>
</comment>
<comment type="sequence caution" evidence="15">
    <conflict type="erroneous initiation">
        <sequence resource="EMBL-CDS" id="AAL13735"/>
    </conflict>
    <text>Extended N-terminus.</text>
</comment>
<comment type="sequence caution" evidence="15">
    <conflict type="erroneous initiation">
        <sequence resource="EMBL-CDS" id="AAZ42161"/>
    </conflict>
    <text>Extended N-terminus.</text>
</comment>
<comment type="sequence caution" evidence="15">
    <conflict type="erroneous initiation">
        <sequence resource="EMBL-CDS" id="ABM92835"/>
    </conflict>
    <text>Extended N-terminus.</text>
</comment>
<comment type="sequence caution" evidence="15">
    <conflict type="frameshift">
        <sequence resource="EMBL-CDS" id="ABM92835"/>
    </conflict>
</comment>
<comment type="sequence caution" evidence="15">
    <conflict type="erroneous initiation">
        <sequence resource="EMBL-CDS" id="ABM92839"/>
    </conflict>
    <text>Extended N-terminus.</text>
</comment>
<comment type="sequence caution" evidence="15">
    <conflict type="frameshift">
        <sequence resource="EMBL-CDS" id="ABM92839"/>
    </conflict>
</comment>
<gene>
    <name type="primary">yki</name>
    <name type="ORF">CG4005</name>
</gene>
<organism>
    <name type="scientific">Drosophila melanogaster</name>
    <name type="common">Fruit fly</name>
    <dbReference type="NCBI Taxonomy" id="7227"/>
    <lineage>
        <taxon>Eukaryota</taxon>
        <taxon>Metazoa</taxon>
        <taxon>Ecdysozoa</taxon>
        <taxon>Arthropoda</taxon>
        <taxon>Hexapoda</taxon>
        <taxon>Insecta</taxon>
        <taxon>Pterygota</taxon>
        <taxon>Neoptera</taxon>
        <taxon>Endopterygota</taxon>
        <taxon>Diptera</taxon>
        <taxon>Brachycera</taxon>
        <taxon>Muscomorpha</taxon>
        <taxon>Ephydroidea</taxon>
        <taxon>Drosophilidae</taxon>
        <taxon>Drosophila</taxon>
        <taxon>Sophophora</taxon>
    </lineage>
</organism>
<accession>Q45VV3</accession>
<accession>A2RVH0</accession>
<accession>A2RVH4</accession>
<accession>Q0E8X1</accession>
<accession>Q7KVG6</accession>
<accession>Q95TU5</accession>
<accession>Q9W1B6</accession>
<name>YAP1_DROME</name>
<dbReference type="EMBL" id="DQ099897">
    <property type="protein sequence ID" value="AAZ42161.1"/>
    <property type="status" value="ALT_INIT"/>
    <property type="molecule type" value="mRNA"/>
</dbReference>
<dbReference type="EMBL" id="AE013599">
    <property type="protein sequence ID" value="ABI31113.2"/>
    <property type="molecule type" value="Genomic_DNA"/>
</dbReference>
<dbReference type="EMBL" id="AE013599">
    <property type="protein sequence ID" value="AAF47156.4"/>
    <property type="molecule type" value="Genomic_DNA"/>
</dbReference>
<dbReference type="EMBL" id="AY058506">
    <property type="protein sequence ID" value="AAL13735.1"/>
    <property type="status" value="ALT_INIT"/>
    <property type="molecule type" value="mRNA"/>
</dbReference>
<dbReference type="EMBL" id="BT029961">
    <property type="protein sequence ID" value="ABM92835.1"/>
    <property type="status" value="ALT_SEQ"/>
    <property type="molecule type" value="mRNA"/>
</dbReference>
<dbReference type="EMBL" id="BT029965">
    <property type="protein sequence ID" value="ABM92839.1"/>
    <property type="status" value="ALT_SEQ"/>
    <property type="molecule type" value="mRNA"/>
</dbReference>
<dbReference type="RefSeq" id="NP_001036568.2">
    <molecule id="Q45VV3-1"/>
    <property type="nucleotide sequence ID" value="NM_001043103.2"/>
</dbReference>
<dbReference type="RefSeq" id="NP_611879.4">
    <molecule id="Q45VV3-2"/>
    <property type="nucleotide sequence ID" value="NM_138035.3"/>
</dbReference>
<dbReference type="RefSeq" id="NP_726414.3">
    <molecule id="Q45VV3-1"/>
    <property type="nucleotide sequence ID" value="NM_166657.5"/>
</dbReference>
<dbReference type="SMR" id="Q45VV3"/>
<dbReference type="BioGRID" id="63430">
    <property type="interactions" value="131"/>
</dbReference>
<dbReference type="FunCoup" id="Q45VV3">
    <property type="interactions" value="400"/>
</dbReference>
<dbReference type="IntAct" id="Q45VV3">
    <property type="interactions" value="12"/>
</dbReference>
<dbReference type="STRING" id="7227.FBpp0402906"/>
<dbReference type="iPTMnet" id="Q45VV3"/>
<dbReference type="PaxDb" id="7227-FBpp0288697"/>
<dbReference type="DNASU" id="37851"/>
<dbReference type="EnsemblMetazoa" id="FBtr0290256">
    <molecule id="Q45VV3-2"/>
    <property type="protein sequence ID" value="FBpp0288695"/>
    <property type="gene ID" value="FBgn0034970"/>
</dbReference>
<dbReference type="EnsemblMetazoa" id="FBtr0290258">
    <molecule id="Q45VV3-1"/>
    <property type="protein sequence ID" value="FBpp0288697"/>
    <property type="gene ID" value="FBgn0034970"/>
</dbReference>
<dbReference type="EnsemblMetazoa" id="FBtr0309372">
    <molecule id="Q45VV3-1"/>
    <property type="protein sequence ID" value="FBpp0301274"/>
    <property type="gene ID" value="FBgn0034970"/>
</dbReference>
<dbReference type="GeneID" id="37851"/>
<dbReference type="KEGG" id="dme:Dmel_CG4005"/>
<dbReference type="UCSC" id="CG4005-RD">
    <property type="organism name" value="d. melanogaster"/>
</dbReference>
<dbReference type="AGR" id="FB:FBgn0034970"/>
<dbReference type="CTD" id="37851"/>
<dbReference type="FlyBase" id="FBgn0034970">
    <property type="gene designation" value="yki"/>
</dbReference>
<dbReference type="VEuPathDB" id="VectorBase:FBgn0034970"/>
<dbReference type="eggNOG" id="KOG0940">
    <property type="taxonomic scope" value="Eukaryota"/>
</dbReference>
<dbReference type="GeneTree" id="ENSGT00510000046760"/>
<dbReference type="HOGENOM" id="CLU_757093_0_0_1"/>
<dbReference type="InParanoid" id="Q45VV3"/>
<dbReference type="OrthoDB" id="2020426at2759"/>
<dbReference type="PhylomeDB" id="Q45VV3"/>
<dbReference type="Reactome" id="R-DME-390098">
    <property type="pathway name" value="Phosphorylation-dependent inhibition of YKI"/>
</dbReference>
<dbReference type="Reactome" id="R-DME-390193">
    <property type="pathway name" value="Transcriptional activation by YKI"/>
</dbReference>
<dbReference type="Reactome" id="R-DME-451806">
    <property type="pathway name" value="Phosphorylation-independent inhibition of YKI"/>
</dbReference>
<dbReference type="SignaLink" id="Q45VV3"/>
<dbReference type="BioGRID-ORCS" id="37851">
    <property type="hits" value="0 hits in 3 CRISPR screens"/>
</dbReference>
<dbReference type="GenomeRNAi" id="37851"/>
<dbReference type="PRO" id="PR:Q45VV3"/>
<dbReference type="Proteomes" id="UP000000803">
    <property type="component" value="Chromosome 2R"/>
</dbReference>
<dbReference type="Bgee" id="FBgn0034970">
    <property type="expression patterns" value="Expressed in adult Malpighian tubule (Drosophila) and 140 other cell types or tissues"/>
</dbReference>
<dbReference type="ExpressionAtlas" id="Q45VV3">
    <property type="expression patterns" value="baseline and differential"/>
</dbReference>
<dbReference type="GO" id="GO:0005911">
    <property type="term" value="C:cell-cell junction"/>
    <property type="evidence" value="ECO:0000250"/>
    <property type="project" value="UniProtKB"/>
</dbReference>
<dbReference type="GO" id="GO:0005737">
    <property type="term" value="C:cytoplasm"/>
    <property type="evidence" value="ECO:0000314"/>
    <property type="project" value="UniProtKB"/>
</dbReference>
<dbReference type="GO" id="GO:0005829">
    <property type="term" value="C:cytosol"/>
    <property type="evidence" value="ECO:0000314"/>
    <property type="project" value="FlyBase"/>
</dbReference>
<dbReference type="GO" id="GO:0097575">
    <property type="term" value="C:lateral cell cortex"/>
    <property type="evidence" value="ECO:0000314"/>
    <property type="project" value="FlyBase"/>
</dbReference>
<dbReference type="GO" id="GO:0005654">
    <property type="term" value="C:nucleoplasm"/>
    <property type="evidence" value="ECO:0000304"/>
    <property type="project" value="Reactome"/>
</dbReference>
<dbReference type="GO" id="GO:0005634">
    <property type="term" value="C:nucleus"/>
    <property type="evidence" value="ECO:0000314"/>
    <property type="project" value="FlyBase"/>
</dbReference>
<dbReference type="GO" id="GO:0090575">
    <property type="term" value="C:RNA polymerase II transcription regulator complex"/>
    <property type="evidence" value="ECO:0000353"/>
    <property type="project" value="FlyBase"/>
</dbReference>
<dbReference type="GO" id="GO:0071889">
    <property type="term" value="F:14-3-3 protein binding"/>
    <property type="evidence" value="ECO:0000353"/>
    <property type="project" value="FlyBase"/>
</dbReference>
<dbReference type="GO" id="GO:0140297">
    <property type="term" value="F:DNA-binding transcription factor binding"/>
    <property type="evidence" value="ECO:0000353"/>
    <property type="project" value="FlyBase"/>
</dbReference>
<dbReference type="GO" id="GO:0019900">
    <property type="term" value="F:kinase binding"/>
    <property type="evidence" value="ECO:0000353"/>
    <property type="project" value="UniProtKB"/>
</dbReference>
<dbReference type="GO" id="GO:0003713">
    <property type="term" value="F:transcription coactivator activity"/>
    <property type="evidence" value="ECO:0000314"/>
    <property type="project" value="FlyBase"/>
</dbReference>
<dbReference type="GO" id="GO:0045176">
    <property type="term" value="P:apical protein localization"/>
    <property type="evidence" value="ECO:0000316"/>
    <property type="project" value="FlyBase"/>
</dbReference>
<dbReference type="GO" id="GO:0007298">
    <property type="term" value="P:border follicle cell migration"/>
    <property type="evidence" value="ECO:0000315"/>
    <property type="project" value="FlyBase"/>
</dbReference>
<dbReference type="GO" id="GO:0035212">
    <property type="term" value="P:cell competition in a multicellular organism"/>
    <property type="evidence" value="ECO:0000315"/>
    <property type="project" value="FlyBase"/>
</dbReference>
<dbReference type="GO" id="GO:0001708">
    <property type="term" value="P:cell fate specification"/>
    <property type="evidence" value="ECO:0000315"/>
    <property type="project" value="FlyBase"/>
</dbReference>
<dbReference type="GO" id="GO:0008283">
    <property type="term" value="P:cell population proliferation"/>
    <property type="evidence" value="ECO:0000315"/>
    <property type="project" value="UniProtKB"/>
</dbReference>
<dbReference type="GO" id="GO:0009957">
    <property type="term" value="P:epidermal cell fate specification"/>
    <property type="evidence" value="ECO:0000316"/>
    <property type="project" value="FlyBase"/>
</dbReference>
<dbReference type="GO" id="GO:0003007">
    <property type="term" value="P:heart morphogenesis"/>
    <property type="evidence" value="ECO:0000315"/>
    <property type="project" value="FlyBase"/>
</dbReference>
<dbReference type="GO" id="GO:0035329">
    <property type="term" value="P:hippo signaling"/>
    <property type="evidence" value="ECO:0000314"/>
    <property type="project" value="FlyBase"/>
</dbReference>
<dbReference type="GO" id="GO:0007560">
    <property type="term" value="P:imaginal disc morphogenesis"/>
    <property type="evidence" value="ECO:0000316"/>
    <property type="project" value="FlyBase"/>
</dbReference>
<dbReference type="GO" id="GO:0002011">
    <property type="term" value="P:morphogenesis of an epithelial sheet"/>
    <property type="evidence" value="ECO:0000315"/>
    <property type="project" value="FlyBase"/>
</dbReference>
<dbReference type="GO" id="GO:0043066">
    <property type="term" value="P:negative regulation of apoptotic process"/>
    <property type="evidence" value="ECO:0000315"/>
    <property type="project" value="UniProtKB"/>
</dbReference>
<dbReference type="GO" id="GO:0008284">
    <property type="term" value="P:positive regulation of cell population proliferation"/>
    <property type="evidence" value="ECO:0000315"/>
    <property type="project" value="FlyBase"/>
</dbReference>
<dbReference type="GO" id="GO:0060252">
    <property type="term" value="P:positive regulation of glial cell proliferation"/>
    <property type="evidence" value="ECO:0000315"/>
    <property type="project" value="FlyBase"/>
</dbReference>
<dbReference type="GO" id="GO:0045927">
    <property type="term" value="P:positive regulation of growth"/>
    <property type="evidence" value="ECO:0000315"/>
    <property type="project" value="FlyBase"/>
</dbReference>
<dbReference type="GO" id="GO:0045572">
    <property type="term" value="P:positive regulation of imaginal disc growth"/>
    <property type="evidence" value="ECO:0000314"/>
    <property type="project" value="FlyBase"/>
</dbReference>
<dbReference type="GO" id="GO:0045944">
    <property type="term" value="P:positive regulation of transcription by RNA polymerase II"/>
    <property type="evidence" value="ECO:0000314"/>
    <property type="project" value="FlyBase"/>
</dbReference>
<dbReference type="GO" id="GO:0045463">
    <property type="term" value="P:R8 cell development"/>
    <property type="evidence" value="ECO:0000315"/>
    <property type="project" value="FlyBase"/>
</dbReference>
<dbReference type="GO" id="GO:0090210">
    <property type="term" value="P:regulation of establishment of blood-brain barrier"/>
    <property type="evidence" value="ECO:0000315"/>
    <property type="project" value="FlyBase"/>
</dbReference>
<dbReference type="GO" id="GO:0040008">
    <property type="term" value="P:regulation of growth"/>
    <property type="evidence" value="ECO:0000315"/>
    <property type="project" value="FlyBase"/>
</dbReference>
<dbReference type="GO" id="GO:2000736">
    <property type="term" value="P:regulation of stem cell differentiation"/>
    <property type="evidence" value="ECO:0000315"/>
    <property type="project" value="FlyBase"/>
</dbReference>
<dbReference type="GO" id="GO:0072091">
    <property type="term" value="P:regulation of stem cell proliferation"/>
    <property type="evidence" value="ECO:0000315"/>
    <property type="project" value="FlyBase"/>
</dbReference>
<dbReference type="GO" id="GO:0072089">
    <property type="term" value="P:stem cell proliferation"/>
    <property type="evidence" value="ECO:0000314"/>
    <property type="project" value="FlyBase"/>
</dbReference>
<dbReference type="CDD" id="cd00201">
    <property type="entry name" value="WW"/>
    <property type="match status" value="2"/>
</dbReference>
<dbReference type="FunFam" id="2.20.70.10:FF:000012">
    <property type="entry name" value="transcriptional coactivator YAP1 isoform X2"/>
    <property type="match status" value="1"/>
</dbReference>
<dbReference type="FunFam" id="2.20.70.10:FF:000112">
    <property type="entry name" value="Yorkie, isoform G"/>
    <property type="match status" value="1"/>
</dbReference>
<dbReference type="Gene3D" id="2.20.70.10">
    <property type="match status" value="2"/>
</dbReference>
<dbReference type="Gene3D" id="6.20.430.10">
    <property type="match status" value="1"/>
</dbReference>
<dbReference type="InterPro" id="IPR053819">
    <property type="entry name" value="TEADIR3_omega_loop"/>
</dbReference>
<dbReference type="InterPro" id="IPR001202">
    <property type="entry name" value="WW_dom"/>
</dbReference>
<dbReference type="InterPro" id="IPR036020">
    <property type="entry name" value="WW_dom_sf"/>
</dbReference>
<dbReference type="InterPro" id="IPR051583">
    <property type="entry name" value="YAP1"/>
</dbReference>
<dbReference type="PANTHER" id="PTHR17616:SF8">
    <property type="entry name" value="TRANSCRIPTIONAL COACTIVATOR YORKIE"/>
    <property type="match status" value="1"/>
</dbReference>
<dbReference type="PANTHER" id="PTHR17616">
    <property type="entry name" value="YES-ASSOCIATED PROTEIN YAP1 FAMILY MEMBER"/>
    <property type="match status" value="1"/>
</dbReference>
<dbReference type="Pfam" id="PF15238">
    <property type="entry name" value="TEADIR3"/>
    <property type="match status" value="1"/>
</dbReference>
<dbReference type="Pfam" id="PF00397">
    <property type="entry name" value="WW"/>
    <property type="match status" value="2"/>
</dbReference>
<dbReference type="SMART" id="SM00456">
    <property type="entry name" value="WW"/>
    <property type="match status" value="2"/>
</dbReference>
<dbReference type="SUPFAM" id="SSF51045">
    <property type="entry name" value="WW domain"/>
    <property type="match status" value="2"/>
</dbReference>
<dbReference type="PROSITE" id="PS01159">
    <property type="entry name" value="WW_DOMAIN_1"/>
    <property type="match status" value="2"/>
</dbReference>
<dbReference type="PROSITE" id="PS50020">
    <property type="entry name" value="WW_DOMAIN_2"/>
    <property type="match status" value="2"/>
</dbReference>
<keyword id="KW-0010">Activator</keyword>
<keyword id="KW-0025">Alternative splicing</keyword>
<keyword id="KW-0963">Cytoplasm</keyword>
<keyword id="KW-0539">Nucleus</keyword>
<keyword id="KW-0597">Phosphoprotein</keyword>
<keyword id="KW-0656">Proto-oncogene</keyword>
<keyword id="KW-1185">Reference proteome</keyword>
<keyword id="KW-0677">Repeat</keyword>
<keyword id="KW-0804">Transcription</keyword>
<keyword id="KW-0805">Transcription regulation</keyword>
<keyword id="KW-0832">Ubl conjugation</keyword>